<comment type="function">
    <text evidence="1">Proton-sensing G-protein coupled receptor.</text>
</comment>
<comment type="subcellular location">
    <subcellularLocation>
        <location evidence="1">Cell membrane</location>
        <topology evidence="2">Multi-pass membrane protein</topology>
    </subcellularLocation>
</comment>
<comment type="tissue specificity">
    <text evidence="5 7">High expression in the brain and lower levels in kidney and liver (PubMed:14667573). In the nervous system expressed specifically in the habenular area (at protein level) (PubMed:25116430).</text>
</comment>
<comment type="developmental stage">
    <text evidence="6">High levels detected at 7 dpc.</text>
</comment>
<proteinExistence type="evidence at protein level"/>
<feature type="chain" id="PRO_0000069633" description="G-protein coupled receptor 151 protein">
    <location>
        <begin position="1"/>
        <end position="422"/>
    </location>
</feature>
<feature type="topological domain" description="Extracellular" evidence="2">
    <location>
        <begin position="1"/>
        <end position="45"/>
    </location>
</feature>
<feature type="transmembrane region" description="Helical; Name=1" evidence="2">
    <location>
        <begin position="46"/>
        <end position="66"/>
    </location>
</feature>
<feature type="topological domain" description="Cytoplasmic" evidence="2">
    <location>
        <begin position="67"/>
        <end position="76"/>
    </location>
</feature>
<feature type="transmembrane region" description="Helical; Name=2" evidence="2">
    <location>
        <begin position="77"/>
        <end position="97"/>
    </location>
</feature>
<feature type="topological domain" description="Extracellular" evidence="2">
    <location>
        <begin position="98"/>
        <end position="123"/>
    </location>
</feature>
<feature type="transmembrane region" description="Helical; Name=3" evidence="2">
    <location>
        <begin position="124"/>
        <end position="144"/>
    </location>
</feature>
<feature type="topological domain" description="Cytoplasmic" evidence="2">
    <location>
        <begin position="145"/>
        <end position="157"/>
    </location>
</feature>
<feature type="transmembrane region" description="Helical; Name=4" evidence="2">
    <location>
        <begin position="158"/>
        <end position="178"/>
    </location>
</feature>
<feature type="topological domain" description="Extracellular" evidence="2">
    <location>
        <begin position="179"/>
        <end position="205"/>
    </location>
</feature>
<feature type="transmembrane region" description="Helical; Name=5" evidence="2">
    <location>
        <begin position="206"/>
        <end position="226"/>
    </location>
</feature>
<feature type="topological domain" description="Cytoplasmic" evidence="2">
    <location>
        <begin position="227"/>
        <end position="259"/>
    </location>
</feature>
<feature type="transmembrane region" description="Helical; Name=6" evidence="2">
    <location>
        <begin position="260"/>
        <end position="280"/>
    </location>
</feature>
<feature type="topological domain" description="Extracellular" evidence="2">
    <location>
        <begin position="281"/>
        <end position="290"/>
    </location>
</feature>
<feature type="transmembrane region" description="Helical; Name=7" evidence="2">
    <location>
        <begin position="291"/>
        <end position="311"/>
    </location>
</feature>
<feature type="topological domain" description="Cytoplasmic" evidence="2">
    <location>
        <begin position="312"/>
        <end position="422"/>
    </location>
</feature>
<feature type="region of interest" description="Disordered" evidence="4">
    <location>
        <begin position="339"/>
        <end position="422"/>
    </location>
</feature>
<feature type="compositionally biased region" description="Basic and acidic residues" evidence="4">
    <location>
        <begin position="366"/>
        <end position="380"/>
    </location>
</feature>
<feature type="glycosylation site" description="N-linked (GlcNAc...) asparagine" evidence="2">
    <location>
        <position position="14"/>
    </location>
</feature>
<feature type="glycosylation site" description="N-linked (GlcNAc...) asparagine" evidence="2">
    <location>
        <position position="19"/>
    </location>
</feature>
<feature type="disulfide bond" evidence="3">
    <location>
        <begin position="115"/>
        <end position="191"/>
    </location>
</feature>
<accession>Q7TSN6</accession>
<accession>Q0VBS2</accession>
<accession>Q80UD8</accession>
<accession>Q8BX88</accession>
<dbReference type="EMBL" id="AJ564167">
    <property type="protein sequence ID" value="CAD91896.1"/>
    <property type="molecule type" value="mRNA"/>
</dbReference>
<dbReference type="EMBL" id="BC120520">
    <property type="protein sequence ID" value="AAI20521.1"/>
    <property type="molecule type" value="mRNA"/>
</dbReference>
<dbReference type="EMBL" id="BC120526">
    <property type="protein sequence ID" value="AAI20527.1"/>
    <property type="molecule type" value="mRNA"/>
</dbReference>
<dbReference type="EMBL" id="AY351677">
    <property type="protein sequence ID" value="AAQ62568.1"/>
    <property type="molecule type" value="mRNA"/>
</dbReference>
<dbReference type="EMBL" id="AK048591">
    <property type="protein sequence ID" value="BAC33383.1"/>
    <property type="molecule type" value="mRNA"/>
</dbReference>
<dbReference type="EMBL" id="AY255533">
    <property type="protein sequence ID" value="AAO85045.1"/>
    <property type="molecule type" value="mRNA"/>
</dbReference>
<dbReference type="CCDS" id="CCDS29215.1"/>
<dbReference type="RefSeq" id="NP_853521.1">
    <property type="nucleotide sequence ID" value="NM_181543.2"/>
</dbReference>
<dbReference type="SMR" id="Q7TSN6"/>
<dbReference type="BioGRID" id="232184">
    <property type="interactions" value="1"/>
</dbReference>
<dbReference type="CORUM" id="Q7TSN6"/>
<dbReference type="FunCoup" id="Q7TSN6">
    <property type="interactions" value="177"/>
</dbReference>
<dbReference type="IntAct" id="Q7TSN6">
    <property type="interactions" value="1"/>
</dbReference>
<dbReference type="STRING" id="10090.ENSMUSP00000058887"/>
<dbReference type="GlyCosmos" id="Q7TSN6">
    <property type="glycosylation" value="2 sites, No reported glycans"/>
</dbReference>
<dbReference type="GlyGen" id="Q7TSN6">
    <property type="glycosylation" value="2 sites"/>
</dbReference>
<dbReference type="PhosphoSitePlus" id="Q7TSN6"/>
<dbReference type="PaxDb" id="10090-ENSMUSP00000058887"/>
<dbReference type="ProteomicsDB" id="267652"/>
<dbReference type="Antibodypedia" id="15831">
    <property type="antibodies" value="316 antibodies from 28 providers"/>
</dbReference>
<dbReference type="DNASU" id="240239"/>
<dbReference type="Ensembl" id="ENSMUST00000054738.5">
    <property type="protein sequence ID" value="ENSMUSP00000058887.4"/>
    <property type="gene ID" value="ENSMUSG00000042816.5"/>
</dbReference>
<dbReference type="GeneID" id="240239"/>
<dbReference type="KEGG" id="mmu:240239"/>
<dbReference type="UCSC" id="uc008eua.1">
    <property type="organism name" value="mouse"/>
</dbReference>
<dbReference type="AGR" id="MGI:2441887"/>
<dbReference type="CTD" id="134391"/>
<dbReference type="MGI" id="MGI:2441887">
    <property type="gene designation" value="Gpr151"/>
</dbReference>
<dbReference type="VEuPathDB" id="HostDB:ENSMUSG00000042816"/>
<dbReference type="eggNOG" id="KOG3656">
    <property type="taxonomic scope" value="Eukaryota"/>
</dbReference>
<dbReference type="GeneTree" id="ENSGT01030000234518"/>
<dbReference type="HOGENOM" id="CLU_053982_0_0_1"/>
<dbReference type="InParanoid" id="Q7TSN6"/>
<dbReference type="OMA" id="CTIWSVL"/>
<dbReference type="OrthoDB" id="9009799at2759"/>
<dbReference type="PhylomeDB" id="Q7TSN6"/>
<dbReference type="TreeFam" id="TF332591"/>
<dbReference type="BioGRID-ORCS" id="240239">
    <property type="hits" value="0 hits in 76 CRISPR screens"/>
</dbReference>
<dbReference type="PRO" id="PR:Q7TSN6"/>
<dbReference type="Proteomes" id="UP000000589">
    <property type="component" value="Chromosome 18"/>
</dbReference>
<dbReference type="RNAct" id="Q7TSN6">
    <property type="molecule type" value="protein"/>
</dbReference>
<dbReference type="Bgee" id="ENSMUSG00000042816">
    <property type="expression patterns" value="Expressed in habenula and 49 other cell types or tissues"/>
</dbReference>
<dbReference type="GO" id="GO:0098981">
    <property type="term" value="C:cholinergic synapse"/>
    <property type="evidence" value="ECO:0000314"/>
    <property type="project" value="SynGO"/>
</dbReference>
<dbReference type="GO" id="GO:0042734">
    <property type="term" value="C:presynaptic membrane"/>
    <property type="evidence" value="ECO:0000314"/>
    <property type="project" value="SynGO"/>
</dbReference>
<dbReference type="GO" id="GO:0030672">
    <property type="term" value="C:synaptic vesicle membrane"/>
    <property type="evidence" value="ECO:0000314"/>
    <property type="project" value="SynGO"/>
</dbReference>
<dbReference type="GO" id="GO:0004930">
    <property type="term" value="F:G protein-coupled receptor activity"/>
    <property type="evidence" value="ECO:0000250"/>
    <property type="project" value="UniProtKB"/>
</dbReference>
<dbReference type="GO" id="GO:0042802">
    <property type="term" value="F:identical protein binding"/>
    <property type="evidence" value="ECO:0007669"/>
    <property type="project" value="Ensembl"/>
</dbReference>
<dbReference type="GO" id="GO:0007186">
    <property type="term" value="P:G protein-coupled receptor signaling pathway"/>
    <property type="evidence" value="ECO:0000250"/>
    <property type="project" value="UniProtKB"/>
</dbReference>
<dbReference type="GO" id="GO:2000300">
    <property type="term" value="P:regulation of synaptic vesicle exocytosis"/>
    <property type="evidence" value="ECO:0000314"/>
    <property type="project" value="SynGO"/>
</dbReference>
<dbReference type="GO" id="GO:0010447">
    <property type="term" value="P:response to acidic pH"/>
    <property type="evidence" value="ECO:0000250"/>
    <property type="project" value="UniProtKB"/>
</dbReference>
<dbReference type="CDD" id="cd15002">
    <property type="entry name" value="7tmA_GPR151"/>
    <property type="match status" value="1"/>
</dbReference>
<dbReference type="FunFam" id="1.20.1070.10:FF:000215">
    <property type="entry name" value="G protein-coupled receptor 151"/>
    <property type="match status" value="1"/>
</dbReference>
<dbReference type="Gene3D" id="1.20.1070.10">
    <property type="entry name" value="Rhodopsin 7-helix transmembrane proteins"/>
    <property type="match status" value="1"/>
</dbReference>
<dbReference type="InterPro" id="IPR000276">
    <property type="entry name" value="GPCR_Rhodpsn"/>
</dbReference>
<dbReference type="InterPro" id="IPR017452">
    <property type="entry name" value="GPCR_Rhodpsn_7TM"/>
</dbReference>
<dbReference type="PANTHER" id="PTHR45695:SF1">
    <property type="entry name" value="G-PROTEIN COUPLED RECEPTOR 151"/>
    <property type="match status" value="1"/>
</dbReference>
<dbReference type="PANTHER" id="PTHR45695">
    <property type="entry name" value="LEUCOKININ RECEPTOR-RELATED"/>
    <property type="match status" value="1"/>
</dbReference>
<dbReference type="Pfam" id="PF00001">
    <property type="entry name" value="7tm_1"/>
    <property type="match status" value="1"/>
</dbReference>
<dbReference type="PRINTS" id="PR00237">
    <property type="entry name" value="GPCRRHODOPSN"/>
</dbReference>
<dbReference type="SUPFAM" id="SSF81321">
    <property type="entry name" value="Family A G protein-coupled receptor-like"/>
    <property type="match status" value="1"/>
</dbReference>
<dbReference type="PROSITE" id="PS50262">
    <property type="entry name" value="G_PROTEIN_RECEP_F1_2"/>
    <property type="match status" value="1"/>
</dbReference>
<gene>
    <name type="primary">Gpr151</name>
    <name type="synonym">Pgr7</name>
</gene>
<keyword id="KW-1003">Cell membrane</keyword>
<keyword id="KW-1015">Disulfide bond</keyword>
<keyword id="KW-0297">G-protein coupled receptor</keyword>
<keyword id="KW-0325">Glycoprotein</keyword>
<keyword id="KW-0472">Membrane</keyword>
<keyword id="KW-0675">Receptor</keyword>
<keyword id="KW-1185">Reference proteome</keyword>
<keyword id="KW-0807">Transducer</keyword>
<keyword id="KW-0812">Transmembrane</keyword>
<keyword id="KW-1133">Transmembrane helix</keyword>
<sequence length="422" mass="46826">MGKAMLRAGFADTNSSNMNESFARLHFAGGYLPSDSKDWRTIIPSLLMAVCLVGLVGNLCVIGILLHGVWKRKPSTIHSLILNLSLADFSLLLFSAPVRAAAYSKGVWDLGWFICKSSDWFTHVCMAAKSLTFVVVAKACFAYASDPAKQESIHSRTIWSVLAGIWVVASLLPLPEWLFSTTRRHAGVEMCLVDVPAVAEEFMSMFGKLYPLLVFCLPLLLAGVYFWRAYDQCKTRCTKTRNLRDQMRSKQLTVMLLSTAIISALLWLPEWIAWLWVWHVKAGGPMPPQGFIALSQVLMFFTSTANPLIFLVMSEEFKAGLKGLWKWMITRKPAVTSEVQEAPAGNTEALPGKAPSPETQTCILDTDGRGSPDDSKEKSGKVVAPILPDVEQFWHERDAVPSAQDNDPIPWEHEGQETEGCN</sequence>
<organism>
    <name type="scientific">Mus musculus</name>
    <name type="common">Mouse</name>
    <dbReference type="NCBI Taxonomy" id="10090"/>
    <lineage>
        <taxon>Eukaryota</taxon>
        <taxon>Metazoa</taxon>
        <taxon>Chordata</taxon>
        <taxon>Craniata</taxon>
        <taxon>Vertebrata</taxon>
        <taxon>Euteleostomi</taxon>
        <taxon>Mammalia</taxon>
        <taxon>Eutheria</taxon>
        <taxon>Euarchontoglires</taxon>
        <taxon>Glires</taxon>
        <taxon>Rodentia</taxon>
        <taxon>Myomorpha</taxon>
        <taxon>Muroidea</taxon>
        <taxon>Muridae</taxon>
        <taxon>Murinae</taxon>
        <taxon>Mus</taxon>
        <taxon>Mus</taxon>
    </lineage>
</organism>
<name>GP151_MOUSE</name>
<protein>
    <recommendedName>
        <fullName>G-protein coupled receptor 151 protein</fullName>
    </recommendedName>
    <alternativeName>
        <fullName>G-protein coupled receptor PGR7</fullName>
    </alternativeName>
    <alternativeName>
        <fullName>GPCR-2037</fullName>
    </alternativeName>
</protein>
<reference key="1">
    <citation type="journal article" date="2003" name="Brain Res. Mol. Brain Res.">
        <title>Cloning of a novel orphan G protein-coupled receptor (GPCR-2037): in situ hybridization reveals high mRNA expression in rat brain restricted to neurons of the habenular complex.</title>
        <authorList>
            <person name="Berthold M."/>
            <person name="Collin M."/>
            <person name="Sejlitz T."/>
            <person name="Meister B."/>
            <person name="Lind P."/>
        </authorList>
    </citation>
    <scope>NUCLEOTIDE SEQUENCE [MRNA]</scope>
    <source>
        <strain>BALB/cJ</strain>
        <tissue>Brain</tissue>
    </source>
</reference>
<reference key="2">
    <citation type="journal article" date="2004" name="Genome Res.">
        <title>The status, quality, and expansion of the NIH full-length cDNA project: the Mammalian Gene Collection (MGC).</title>
        <authorList>
            <consortium name="The MGC Project Team"/>
        </authorList>
    </citation>
    <scope>NUCLEOTIDE SEQUENCE [LARGE SCALE MRNA]</scope>
    <source>
        <tissue>Brain</tissue>
    </source>
</reference>
<reference key="3">
    <citation type="journal article" date="2004" name="Neuropharmacology">
        <title>Cloning and characterization of a novel G-protein-coupled receptor with homology to galanin receptors.</title>
        <authorList>
            <person name="Ignatov A."/>
            <person name="Hermans-Borgmeyer I."/>
            <person name="Schaller H.C."/>
        </authorList>
    </citation>
    <scope>NUCLEOTIDE SEQUENCE [MRNA] OF 5-422</scope>
    <scope>TISSUE SPECIFICITY</scope>
    <scope>DEVELOPMENTAL STAGE</scope>
</reference>
<reference key="4">
    <citation type="journal article" date="2005" name="Science">
        <title>The transcriptional landscape of the mammalian genome.</title>
        <authorList>
            <person name="Carninci P."/>
            <person name="Kasukawa T."/>
            <person name="Katayama S."/>
            <person name="Gough J."/>
            <person name="Frith M.C."/>
            <person name="Maeda N."/>
            <person name="Oyama R."/>
            <person name="Ravasi T."/>
            <person name="Lenhard B."/>
            <person name="Wells C."/>
            <person name="Kodzius R."/>
            <person name="Shimokawa K."/>
            <person name="Bajic V.B."/>
            <person name="Brenner S.E."/>
            <person name="Batalov S."/>
            <person name="Forrest A.R."/>
            <person name="Zavolan M."/>
            <person name="Davis M.J."/>
            <person name="Wilming L.G."/>
            <person name="Aidinis V."/>
            <person name="Allen J.E."/>
            <person name="Ambesi-Impiombato A."/>
            <person name="Apweiler R."/>
            <person name="Aturaliya R.N."/>
            <person name="Bailey T.L."/>
            <person name="Bansal M."/>
            <person name="Baxter L."/>
            <person name="Beisel K.W."/>
            <person name="Bersano T."/>
            <person name="Bono H."/>
            <person name="Chalk A.M."/>
            <person name="Chiu K.P."/>
            <person name="Choudhary V."/>
            <person name="Christoffels A."/>
            <person name="Clutterbuck D.R."/>
            <person name="Crowe M.L."/>
            <person name="Dalla E."/>
            <person name="Dalrymple B.P."/>
            <person name="de Bono B."/>
            <person name="Della Gatta G."/>
            <person name="di Bernardo D."/>
            <person name="Down T."/>
            <person name="Engstrom P."/>
            <person name="Fagiolini M."/>
            <person name="Faulkner G."/>
            <person name="Fletcher C.F."/>
            <person name="Fukushima T."/>
            <person name="Furuno M."/>
            <person name="Futaki S."/>
            <person name="Gariboldi M."/>
            <person name="Georgii-Hemming P."/>
            <person name="Gingeras T.R."/>
            <person name="Gojobori T."/>
            <person name="Green R.E."/>
            <person name="Gustincich S."/>
            <person name="Harbers M."/>
            <person name="Hayashi Y."/>
            <person name="Hensch T.K."/>
            <person name="Hirokawa N."/>
            <person name="Hill D."/>
            <person name="Huminiecki L."/>
            <person name="Iacono M."/>
            <person name="Ikeo K."/>
            <person name="Iwama A."/>
            <person name="Ishikawa T."/>
            <person name="Jakt M."/>
            <person name="Kanapin A."/>
            <person name="Katoh M."/>
            <person name="Kawasawa Y."/>
            <person name="Kelso J."/>
            <person name="Kitamura H."/>
            <person name="Kitano H."/>
            <person name="Kollias G."/>
            <person name="Krishnan S.P."/>
            <person name="Kruger A."/>
            <person name="Kummerfeld S.K."/>
            <person name="Kurochkin I.V."/>
            <person name="Lareau L.F."/>
            <person name="Lazarevic D."/>
            <person name="Lipovich L."/>
            <person name="Liu J."/>
            <person name="Liuni S."/>
            <person name="McWilliam S."/>
            <person name="Madan Babu M."/>
            <person name="Madera M."/>
            <person name="Marchionni L."/>
            <person name="Matsuda H."/>
            <person name="Matsuzawa S."/>
            <person name="Miki H."/>
            <person name="Mignone F."/>
            <person name="Miyake S."/>
            <person name="Morris K."/>
            <person name="Mottagui-Tabar S."/>
            <person name="Mulder N."/>
            <person name="Nakano N."/>
            <person name="Nakauchi H."/>
            <person name="Ng P."/>
            <person name="Nilsson R."/>
            <person name="Nishiguchi S."/>
            <person name="Nishikawa S."/>
            <person name="Nori F."/>
            <person name="Ohara O."/>
            <person name="Okazaki Y."/>
            <person name="Orlando V."/>
            <person name="Pang K.C."/>
            <person name="Pavan W.J."/>
            <person name="Pavesi G."/>
            <person name="Pesole G."/>
            <person name="Petrovsky N."/>
            <person name="Piazza S."/>
            <person name="Reed J."/>
            <person name="Reid J.F."/>
            <person name="Ring B.Z."/>
            <person name="Ringwald M."/>
            <person name="Rost B."/>
            <person name="Ruan Y."/>
            <person name="Salzberg S.L."/>
            <person name="Sandelin A."/>
            <person name="Schneider C."/>
            <person name="Schoenbach C."/>
            <person name="Sekiguchi K."/>
            <person name="Semple C.A."/>
            <person name="Seno S."/>
            <person name="Sessa L."/>
            <person name="Sheng Y."/>
            <person name="Shibata Y."/>
            <person name="Shimada H."/>
            <person name="Shimada K."/>
            <person name="Silva D."/>
            <person name="Sinclair B."/>
            <person name="Sperling S."/>
            <person name="Stupka E."/>
            <person name="Sugiura K."/>
            <person name="Sultana R."/>
            <person name="Takenaka Y."/>
            <person name="Taki K."/>
            <person name="Tammoja K."/>
            <person name="Tan S.L."/>
            <person name="Tang S."/>
            <person name="Taylor M.S."/>
            <person name="Tegner J."/>
            <person name="Teichmann S.A."/>
            <person name="Ueda H.R."/>
            <person name="van Nimwegen E."/>
            <person name="Verardo R."/>
            <person name="Wei C.L."/>
            <person name="Yagi K."/>
            <person name="Yamanishi H."/>
            <person name="Zabarovsky E."/>
            <person name="Zhu S."/>
            <person name="Zimmer A."/>
            <person name="Hide W."/>
            <person name="Bult C."/>
            <person name="Grimmond S.M."/>
            <person name="Teasdale R.D."/>
            <person name="Liu E.T."/>
            <person name="Brusic V."/>
            <person name="Quackenbush J."/>
            <person name="Wahlestedt C."/>
            <person name="Mattick J.S."/>
            <person name="Hume D.A."/>
            <person name="Kai C."/>
            <person name="Sasaki D."/>
            <person name="Tomaru Y."/>
            <person name="Fukuda S."/>
            <person name="Kanamori-Katayama M."/>
            <person name="Suzuki M."/>
            <person name="Aoki J."/>
            <person name="Arakawa T."/>
            <person name="Iida J."/>
            <person name="Imamura K."/>
            <person name="Itoh M."/>
            <person name="Kato T."/>
            <person name="Kawaji H."/>
            <person name="Kawagashira N."/>
            <person name="Kawashima T."/>
            <person name="Kojima M."/>
            <person name="Kondo S."/>
            <person name="Konno H."/>
            <person name="Nakano K."/>
            <person name="Ninomiya N."/>
            <person name="Nishio T."/>
            <person name="Okada M."/>
            <person name="Plessy C."/>
            <person name="Shibata K."/>
            <person name="Shiraki T."/>
            <person name="Suzuki S."/>
            <person name="Tagami M."/>
            <person name="Waki K."/>
            <person name="Watahiki A."/>
            <person name="Okamura-Oho Y."/>
            <person name="Suzuki H."/>
            <person name="Kawai J."/>
            <person name="Hayashizaki Y."/>
        </authorList>
    </citation>
    <scope>NUCLEOTIDE SEQUENCE [LARGE SCALE MRNA] OF 102-422</scope>
    <source>
        <strain>C57BL/6J</strain>
        <tissue>Head</tissue>
    </source>
</reference>
<reference key="5">
    <citation type="journal article" date="2003" name="Proc. Natl. Acad. Sci. U.S.A.">
        <title>The G protein-coupled receptor repertoires of human and mouse.</title>
        <authorList>
            <person name="Vassilatis D.K."/>
            <person name="Hohmann J.G."/>
            <person name="Zeng H."/>
            <person name="Li F."/>
            <person name="Ranchalis J.E."/>
            <person name="Mortrud M.T."/>
            <person name="Brown A."/>
            <person name="Rodriguez S.S."/>
            <person name="Weller J.R."/>
            <person name="Wright A.C."/>
            <person name="Bergmann J.E."/>
            <person name="Gaitanaris G.A."/>
        </authorList>
    </citation>
    <scope>NUCLEOTIDE SEQUENCE [LARGE SCALE MRNA] OF 45-158</scope>
</reference>
<reference key="6">
    <citation type="journal article" date="2015" name="J. Comp. Neurol.">
        <title>Conserved expression of the GPR151 receptor in habenular axonal projections of vertebrates.</title>
        <authorList>
            <person name="Broms J."/>
            <person name="Antolin-Fontes B."/>
            <person name="Tingstroem A."/>
            <person name="Ibanez-Tallon I."/>
        </authorList>
    </citation>
    <scope>TISSUE SPECIFICITY</scope>
</reference>
<evidence type="ECO:0000250" key="1">
    <source>
        <dbReference type="UniProtKB" id="Q8TDV0"/>
    </source>
</evidence>
<evidence type="ECO:0000255" key="2"/>
<evidence type="ECO:0000255" key="3">
    <source>
        <dbReference type="PROSITE-ProRule" id="PRU00521"/>
    </source>
</evidence>
<evidence type="ECO:0000256" key="4">
    <source>
        <dbReference type="SAM" id="MobiDB-lite"/>
    </source>
</evidence>
<evidence type="ECO:0000269" key="5">
    <source>
    </source>
</evidence>
<evidence type="ECO:0000269" key="6">
    <source>
    </source>
</evidence>
<evidence type="ECO:0000269" key="7">
    <source>
    </source>
</evidence>